<reference key="1">
    <citation type="journal article" date="2006" name="BMC Genomics">
        <title>Complete genome sequence of Shigella flexneri 5b and comparison with Shigella flexneri 2a.</title>
        <authorList>
            <person name="Nie H."/>
            <person name="Yang F."/>
            <person name="Zhang X."/>
            <person name="Yang J."/>
            <person name="Chen L."/>
            <person name="Wang J."/>
            <person name="Xiong Z."/>
            <person name="Peng J."/>
            <person name="Sun L."/>
            <person name="Dong J."/>
            <person name="Xue Y."/>
            <person name="Xu X."/>
            <person name="Chen S."/>
            <person name="Yao Z."/>
            <person name="Shen Y."/>
            <person name="Jin Q."/>
        </authorList>
    </citation>
    <scope>NUCLEOTIDE SEQUENCE [LARGE SCALE GENOMIC DNA]</scope>
    <source>
        <strain>8401</strain>
    </source>
</reference>
<accession>Q0SYH0</accession>
<evidence type="ECO:0000255" key="1">
    <source>
        <dbReference type="HAMAP-Rule" id="MF_00564"/>
    </source>
</evidence>
<organism>
    <name type="scientific">Shigella flexneri serotype 5b (strain 8401)</name>
    <dbReference type="NCBI Taxonomy" id="373384"/>
    <lineage>
        <taxon>Bacteria</taxon>
        <taxon>Pseudomonadati</taxon>
        <taxon>Pseudomonadota</taxon>
        <taxon>Gammaproteobacteria</taxon>
        <taxon>Enterobacterales</taxon>
        <taxon>Enterobacteriaceae</taxon>
        <taxon>Shigella</taxon>
    </lineage>
</organism>
<keyword id="KW-0548">Nucleotidyltransferase</keyword>
<keyword id="KW-0694">RNA-binding</keyword>
<keyword id="KW-0698">rRNA processing</keyword>
<keyword id="KW-0808">Transferase</keyword>
<keyword id="KW-0819">tRNA processing</keyword>
<keyword id="KW-0820">tRNA-binding</keyword>
<gene>
    <name evidence="1" type="primary">rph</name>
    <name type="ordered locus">SFV_3887</name>
</gene>
<comment type="function">
    <text evidence="1">Phosphorolytic 3'-5' exoribonuclease that plays an important role in tRNA 3'-end maturation. Removes nucleotide residues following the 3'-CCA terminus of tRNAs; can also add nucleotides to the ends of RNA molecules by using nucleoside diphosphates as substrates, but this may not be physiologically important. Probably plays a role in initiation of 16S rRNA degradation (leading to ribosome degradation) during starvation.</text>
</comment>
<comment type="catalytic activity">
    <reaction evidence="1">
        <text>tRNA(n+1) + phosphate = tRNA(n) + a ribonucleoside 5'-diphosphate</text>
        <dbReference type="Rhea" id="RHEA:10628"/>
        <dbReference type="Rhea" id="RHEA-COMP:17343"/>
        <dbReference type="Rhea" id="RHEA-COMP:17344"/>
        <dbReference type="ChEBI" id="CHEBI:43474"/>
        <dbReference type="ChEBI" id="CHEBI:57930"/>
        <dbReference type="ChEBI" id="CHEBI:173114"/>
        <dbReference type="EC" id="2.7.7.56"/>
    </reaction>
</comment>
<comment type="subunit">
    <text evidence="1">Homohexameric ring arranged as a trimer of dimers.</text>
</comment>
<comment type="similarity">
    <text evidence="1">Belongs to the RNase PH family.</text>
</comment>
<name>RNPH_SHIF8</name>
<dbReference type="EC" id="2.7.7.56" evidence="1"/>
<dbReference type="EMBL" id="CP000266">
    <property type="protein sequence ID" value="ABF05895.1"/>
    <property type="molecule type" value="Genomic_DNA"/>
</dbReference>
<dbReference type="RefSeq" id="WP_001247089.1">
    <property type="nucleotide sequence ID" value="NC_008258.1"/>
</dbReference>
<dbReference type="SMR" id="Q0SYH0"/>
<dbReference type="GeneID" id="75202212"/>
<dbReference type="KEGG" id="sfv:SFV_3887"/>
<dbReference type="HOGENOM" id="CLU_050858_0_0_6"/>
<dbReference type="Proteomes" id="UP000000659">
    <property type="component" value="Chromosome"/>
</dbReference>
<dbReference type="GO" id="GO:0000175">
    <property type="term" value="F:3'-5'-RNA exonuclease activity"/>
    <property type="evidence" value="ECO:0007669"/>
    <property type="project" value="UniProtKB-UniRule"/>
</dbReference>
<dbReference type="GO" id="GO:0000049">
    <property type="term" value="F:tRNA binding"/>
    <property type="evidence" value="ECO:0007669"/>
    <property type="project" value="UniProtKB-UniRule"/>
</dbReference>
<dbReference type="GO" id="GO:0009022">
    <property type="term" value="F:tRNA nucleotidyltransferase activity"/>
    <property type="evidence" value="ECO:0007669"/>
    <property type="project" value="UniProtKB-UniRule"/>
</dbReference>
<dbReference type="GO" id="GO:0016075">
    <property type="term" value="P:rRNA catabolic process"/>
    <property type="evidence" value="ECO:0007669"/>
    <property type="project" value="UniProtKB-UniRule"/>
</dbReference>
<dbReference type="GO" id="GO:0006364">
    <property type="term" value="P:rRNA processing"/>
    <property type="evidence" value="ECO:0007669"/>
    <property type="project" value="UniProtKB-KW"/>
</dbReference>
<dbReference type="GO" id="GO:0008033">
    <property type="term" value="P:tRNA processing"/>
    <property type="evidence" value="ECO:0007669"/>
    <property type="project" value="UniProtKB-UniRule"/>
</dbReference>
<dbReference type="CDD" id="cd11362">
    <property type="entry name" value="RNase_PH_bact"/>
    <property type="match status" value="1"/>
</dbReference>
<dbReference type="FunFam" id="3.30.230.70:FF:000003">
    <property type="entry name" value="Ribonuclease PH"/>
    <property type="match status" value="1"/>
</dbReference>
<dbReference type="Gene3D" id="3.30.230.70">
    <property type="entry name" value="GHMP Kinase, N-terminal domain"/>
    <property type="match status" value="1"/>
</dbReference>
<dbReference type="HAMAP" id="MF_00564">
    <property type="entry name" value="RNase_PH"/>
    <property type="match status" value="1"/>
</dbReference>
<dbReference type="InterPro" id="IPR001247">
    <property type="entry name" value="ExoRNase_PH_dom1"/>
</dbReference>
<dbReference type="InterPro" id="IPR015847">
    <property type="entry name" value="ExoRNase_PH_dom2"/>
</dbReference>
<dbReference type="InterPro" id="IPR036345">
    <property type="entry name" value="ExoRNase_PH_dom2_sf"/>
</dbReference>
<dbReference type="InterPro" id="IPR027408">
    <property type="entry name" value="PNPase/RNase_PH_dom_sf"/>
</dbReference>
<dbReference type="InterPro" id="IPR020568">
    <property type="entry name" value="Ribosomal_Su5_D2-typ_SF"/>
</dbReference>
<dbReference type="InterPro" id="IPR050080">
    <property type="entry name" value="RNase_PH"/>
</dbReference>
<dbReference type="InterPro" id="IPR002381">
    <property type="entry name" value="RNase_PH_bac-type"/>
</dbReference>
<dbReference type="InterPro" id="IPR018336">
    <property type="entry name" value="RNase_PH_CS"/>
</dbReference>
<dbReference type="NCBIfam" id="TIGR01966">
    <property type="entry name" value="RNasePH"/>
    <property type="match status" value="1"/>
</dbReference>
<dbReference type="PANTHER" id="PTHR11953">
    <property type="entry name" value="EXOSOME COMPLEX COMPONENT"/>
    <property type="match status" value="1"/>
</dbReference>
<dbReference type="PANTHER" id="PTHR11953:SF0">
    <property type="entry name" value="EXOSOME COMPLEX COMPONENT RRP41"/>
    <property type="match status" value="1"/>
</dbReference>
<dbReference type="Pfam" id="PF01138">
    <property type="entry name" value="RNase_PH"/>
    <property type="match status" value="1"/>
</dbReference>
<dbReference type="Pfam" id="PF03725">
    <property type="entry name" value="RNase_PH_C"/>
    <property type="match status" value="1"/>
</dbReference>
<dbReference type="SUPFAM" id="SSF55666">
    <property type="entry name" value="Ribonuclease PH domain 2-like"/>
    <property type="match status" value="1"/>
</dbReference>
<dbReference type="SUPFAM" id="SSF54211">
    <property type="entry name" value="Ribosomal protein S5 domain 2-like"/>
    <property type="match status" value="1"/>
</dbReference>
<dbReference type="PROSITE" id="PS01277">
    <property type="entry name" value="RIBONUCLEASE_PH"/>
    <property type="match status" value="1"/>
</dbReference>
<sequence length="238" mass="25326">MRPAGRSNNQVRPVTLTRNYTKHAEGSVLVEFGDTKVLCTASIEEGVPRFLKGQGQGWITAEYGMLPRSTHTRNAREAAKGKQGGRTMEIQRLIARALRAAVDLKALGEFTITLDCDVLQADGGTRTASITGACVALADALQKLVENGKLKTNPMKGMVAAVSVGIVNGEAICDLEYVEDSAAETDMNVVMTEDGRIIEVQGTAEGEPFTHEELLTLLALARGGIESIVATQKAALAN</sequence>
<proteinExistence type="inferred from homology"/>
<protein>
    <recommendedName>
        <fullName evidence="1">Ribonuclease PH</fullName>
        <shortName evidence="1">RNase PH</shortName>
        <ecNumber evidence="1">2.7.7.56</ecNumber>
    </recommendedName>
    <alternativeName>
        <fullName evidence="1">tRNA nucleotidyltransferase</fullName>
    </alternativeName>
</protein>
<feature type="chain" id="PRO_1000024891" description="Ribonuclease PH">
    <location>
        <begin position="1"/>
        <end position="238"/>
    </location>
</feature>
<feature type="binding site" evidence="1">
    <location>
        <position position="86"/>
    </location>
    <ligand>
        <name>phosphate</name>
        <dbReference type="ChEBI" id="CHEBI:43474"/>
        <note>substrate</note>
    </ligand>
</feature>
<feature type="binding site" evidence="1">
    <location>
        <begin position="124"/>
        <end position="126"/>
    </location>
    <ligand>
        <name>phosphate</name>
        <dbReference type="ChEBI" id="CHEBI:43474"/>
        <note>substrate</note>
    </ligand>
</feature>